<gene>
    <name evidence="1" type="primary">rlmN</name>
    <name type="ordered locus">Cag_0825</name>
</gene>
<proteinExistence type="inferred from homology"/>
<name>RLMN_CHLCH</name>
<comment type="function">
    <text evidence="1">Specifically methylates position 2 of adenine 2503 in 23S rRNA and position 2 of adenine 37 in tRNAs.</text>
</comment>
<comment type="catalytic activity">
    <reaction evidence="1">
        <text>adenosine(2503) in 23S rRNA + 2 reduced [2Fe-2S]-[ferredoxin] + 2 S-adenosyl-L-methionine = 2-methyladenosine(2503) in 23S rRNA + 5'-deoxyadenosine + L-methionine + 2 oxidized [2Fe-2S]-[ferredoxin] + S-adenosyl-L-homocysteine</text>
        <dbReference type="Rhea" id="RHEA:42916"/>
        <dbReference type="Rhea" id="RHEA-COMP:10000"/>
        <dbReference type="Rhea" id="RHEA-COMP:10001"/>
        <dbReference type="Rhea" id="RHEA-COMP:10152"/>
        <dbReference type="Rhea" id="RHEA-COMP:10282"/>
        <dbReference type="ChEBI" id="CHEBI:17319"/>
        <dbReference type="ChEBI" id="CHEBI:33737"/>
        <dbReference type="ChEBI" id="CHEBI:33738"/>
        <dbReference type="ChEBI" id="CHEBI:57844"/>
        <dbReference type="ChEBI" id="CHEBI:57856"/>
        <dbReference type="ChEBI" id="CHEBI:59789"/>
        <dbReference type="ChEBI" id="CHEBI:74411"/>
        <dbReference type="ChEBI" id="CHEBI:74497"/>
        <dbReference type="EC" id="2.1.1.192"/>
    </reaction>
</comment>
<comment type="catalytic activity">
    <reaction evidence="1">
        <text>adenosine(37) in tRNA + 2 reduced [2Fe-2S]-[ferredoxin] + 2 S-adenosyl-L-methionine = 2-methyladenosine(37) in tRNA + 5'-deoxyadenosine + L-methionine + 2 oxidized [2Fe-2S]-[ferredoxin] + S-adenosyl-L-homocysteine</text>
        <dbReference type="Rhea" id="RHEA:43332"/>
        <dbReference type="Rhea" id="RHEA-COMP:10000"/>
        <dbReference type="Rhea" id="RHEA-COMP:10001"/>
        <dbReference type="Rhea" id="RHEA-COMP:10162"/>
        <dbReference type="Rhea" id="RHEA-COMP:10485"/>
        <dbReference type="ChEBI" id="CHEBI:17319"/>
        <dbReference type="ChEBI" id="CHEBI:33737"/>
        <dbReference type="ChEBI" id="CHEBI:33738"/>
        <dbReference type="ChEBI" id="CHEBI:57844"/>
        <dbReference type="ChEBI" id="CHEBI:57856"/>
        <dbReference type="ChEBI" id="CHEBI:59789"/>
        <dbReference type="ChEBI" id="CHEBI:74411"/>
        <dbReference type="ChEBI" id="CHEBI:74497"/>
        <dbReference type="EC" id="2.1.1.192"/>
    </reaction>
</comment>
<comment type="cofactor">
    <cofactor evidence="1">
        <name>[4Fe-4S] cluster</name>
        <dbReference type="ChEBI" id="CHEBI:49883"/>
    </cofactor>
    <text evidence="1">Binds 1 [4Fe-4S] cluster. The cluster is coordinated with 3 cysteines and an exchangeable S-adenosyl-L-methionine.</text>
</comment>
<comment type="subcellular location">
    <subcellularLocation>
        <location evidence="1">Cytoplasm</location>
    </subcellularLocation>
</comment>
<comment type="miscellaneous">
    <text evidence="1">Reaction proceeds by a ping-pong mechanism involving intermediate methylation of a conserved cysteine residue.</text>
</comment>
<comment type="similarity">
    <text evidence="1">Belongs to the radical SAM superfamily. RlmN family.</text>
</comment>
<feature type="chain" id="PRO_0000350102" description="Probable dual-specificity RNA methyltransferase RlmN">
    <location>
        <begin position="1"/>
        <end position="366"/>
    </location>
</feature>
<feature type="domain" description="Radical SAM core" evidence="2">
    <location>
        <begin position="113"/>
        <end position="342"/>
    </location>
</feature>
<feature type="active site" description="Proton acceptor" evidence="1">
    <location>
        <position position="107"/>
    </location>
</feature>
<feature type="active site" description="S-methylcysteine intermediate" evidence="1">
    <location>
        <position position="353"/>
    </location>
</feature>
<feature type="binding site" evidence="1">
    <location>
        <position position="127"/>
    </location>
    <ligand>
        <name>[4Fe-4S] cluster</name>
        <dbReference type="ChEBI" id="CHEBI:49883"/>
        <note>4Fe-4S-S-AdoMet</note>
    </ligand>
</feature>
<feature type="binding site" evidence="1">
    <location>
        <position position="131"/>
    </location>
    <ligand>
        <name>[4Fe-4S] cluster</name>
        <dbReference type="ChEBI" id="CHEBI:49883"/>
        <note>4Fe-4S-S-AdoMet</note>
    </ligand>
</feature>
<feature type="binding site" evidence="1">
    <location>
        <position position="134"/>
    </location>
    <ligand>
        <name>[4Fe-4S] cluster</name>
        <dbReference type="ChEBI" id="CHEBI:49883"/>
        <note>4Fe-4S-S-AdoMet</note>
    </ligand>
</feature>
<feature type="binding site" evidence="1">
    <location>
        <begin position="177"/>
        <end position="178"/>
    </location>
    <ligand>
        <name>S-adenosyl-L-methionine</name>
        <dbReference type="ChEBI" id="CHEBI:59789"/>
    </ligand>
</feature>
<feature type="binding site" evidence="1">
    <location>
        <position position="210"/>
    </location>
    <ligand>
        <name>S-adenosyl-L-methionine</name>
        <dbReference type="ChEBI" id="CHEBI:59789"/>
    </ligand>
</feature>
<feature type="binding site" evidence="1">
    <location>
        <begin position="233"/>
        <end position="235"/>
    </location>
    <ligand>
        <name>S-adenosyl-L-methionine</name>
        <dbReference type="ChEBI" id="CHEBI:59789"/>
    </ligand>
</feature>
<feature type="binding site" evidence="1">
    <location>
        <position position="310"/>
    </location>
    <ligand>
        <name>S-adenosyl-L-methionine</name>
        <dbReference type="ChEBI" id="CHEBI:59789"/>
    </ligand>
</feature>
<feature type="disulfide bond" description="(transient)" evidence="1">
    <location>
        <begin position="120"/>
        <end position="353"/>
    </location>
</feature>
<reference key="1">
    <citation type="submission" date="2005-08" db="EMBL/GenBank/DDBJ databases">
        <title>Complete sequence of Chlorobium chlorochromatii CaD3.</title>
        <authorList>
            <consortium name="US DOE Joint Genome Institute"/>
            <person name="Copeland A."/>
            <person name="Lucas S."/>
            <person name="Lapidus A."/>
            <person name="Barry K."/>
            <person name="Detter J.C."/>
            <person name="Glavina T."/>
            <person name="Hammon N."/>
            <person name="Israni S."/>
            <person name="Pitluck S."/>
            <person name="Bryant D."/>
            <person name="Schmutz J."/>
            <person name="Larimer F."/>
            <person name="Land M."/>
            <person name="Kyrpides N."/>
            <person name="Ivanova N."/>
            <person name="Richardson P."/>
        </authorList>
    </citation>
    <scope>NUCLEOTIDE SEQUENCE [LARGE SCALE GENOMIC DNA]</scope>
    <source>
        <strain>CaD3</strain>
    </source>
</reference>
<organism>
    <name type="scientific">Chlorobium chlorochromatii (strain CaD3)</name>
    <dbReference type="NCBI Taxonomy" id="340177"/>
    <lineage>
        <taxon>Bacteria</taxon>
        <taxon>Pseudomonadati</taxon>
        <taxon>Chlorobiota</taxon>
        <taxon>Chlorobiia</taxon>
        <taxon>Chlorobiales</taxon>
        <taxon>Chlorobiaceae</taxon>
        <taxon>Chlorobium/Pelodictyon group</taxon>
        <taxon>Chlorobium</taxon>
    </lineage>
</organism>
<accession>Q3ASD4</accession>
<protein>
    <recommendedName>
        <fullName evidence="1">Probable dual-specificity RNA methyltransferase RlmN</fullName>
        <ecNumber evidence="1">2.1.1.192</ecNumber>
    </recommendedName>
    <alternativeName>
        <fullName evidence="1">23S rRNA (adenine(2503)-C(2))-methyltransferase</fullName>
    </alternativeName>
    <alternativeName>
        <fullName evidence="1">23S rRNA m2A2503 methyltransferase</fullName>
    </alternativeName>
    <alternativeName>
        <fullName evidence="1">Ribosomal RNA large subunit methyltransferase N</fullName>
    </alternativeName>
    <alternativeName>
        <fullName evidence="1">tRNA (adenine(37)-C(2))-methyltransferase</fullName>
    </alternativeName>
    <alternativeName>
        <fullName evidence="1">tRNA m2A37 methyltransferase</fullName>
    </alternativeName>
</protein>
<sequence>MTHTTPLLPLAPPINLVDLRYNELHNAITAFGEPPFRAKQIHEWLFSHHANSFAAMSSLPLRLREKLAERFTLQRPEVVEVQESCESGCLRPTRKILLKLSDGALIECVLIPAEERMTACLSSQAGCPMQCTFCATGTMGLQRNLSAGEIWEQLYALNGLALQEGKTITNVVFMGMGEPLLNTDNVLEAIATMSSRNYNLSLSQRKITISTVGIVPEIERLSRSGLKTKLAVSLHSARQEVRQQLMPIAAERYPLPLLSKSLEAYSKATGEAITIVYMMLNGVNDSKEDAHLLARYCRHFSCKINLIDYNPILTIRFGSVQESQKNEFQAYLMAQKFHVTVRKSYGASVNAACGQLVTQQQRRTIK</sequence>
<keyword id="KW-0004">4Fe-4S</keyword>
<keyword id="KW-0963">Cytoplasm</keyword>
<keyword id="KW-1015">Disulfide bond</keyword>
<keyword id="KW-0408">Iron</keyword>
<keyword id="KW-0411">Iron-sulfur</keyword>
<keyword id="KW-0479">Metal-binding</keyword>
<keyword id="KW-0489">Methyltransferase</keyword>
<keyword id="KW-0698">rRNA processing</keyword>
<keyword id="KW-0949">S-adenosyl-L-methionine</keyword>
<keyword id="KW-0808">Transferase</keyword>
<keyword id="KW-0819">tRNA processing</keyword>
<dbReference type="EC" id="2.1.1.192" evidence="1"/>
<dbReference type="EMBL" id="CP000108">
    <property type="protein sequence ID" value="ABB28091.1"/>
    <property type="molecule type" value="Genomic_DNA"/>
</dbReference>
<dbReference type="SMR" id="Q3ASD4"/>
<dbReference type="STRING" id="340177.Cag_0825"/>
<dbReference type="KEGG" id="cch:Cag_0825"/>
<dbReference type="eggNOG" id="COG0820">
    <property type="taxonomic scope" value="Bacteria"/>
</dbReference>
<dbReference type="HOGENOM" id="CLU_029101_0_0_10"/>
<dbReference type="OrthoDB" id="9793973at2"/>
<dbReference type="GO" id="GO:0005737">
    <property type="term" value="C:cytoplasm"/>
    <property type="evidence" value="ECO:0007669"/>
    <property type="project" value="UniProtKB-SubCell"/>
</dbReference>
<dbReference type="GO" id="GO:0051539">
    <property type="term" value="F:4 iron, 4 sulfur cluster binding"/>
    <property type="evidence" value="ECO:0007669"/>
    <property type="project" value="UniProtKB-UniRule"/>
</dbReference>
<dbReference type="GO" id="GO:0046872">
    <property type="term" value="F:metal ion binding"/>
    <property type="evidence" value="ECO:0007669"/>
    <property type="project" value="UniProtKB-KW"/>
</dbReference>
<dbReference type="GO" id="GO:0070040">
    <property type="term" value="F:rRNA (adenine(2503)-C2-)-methyltransferase activity"/>
    <property type="evidence" value="ECO:0007669"/>
    <property type="project" value="UniProtKB-UniRule"/>
</dbReference>
<dbReference type="GO" id="GO:0019843">
    <property type="term" value="F:rRNA binding"/>
    <property type="evidence" value="ECO:0007669"/>
    <property type="project" value="UniProtKB-UniRule"/>
</dbReference>
<dbReference type="GO" id="GO:0002935">
    <property type="term" value="F:tRNA (adenine(37)-C2)-methyltransferase activity"/>
    <property type="evidence" value="ECO:0007669"/>
    <property type="project" value="UniProtKB-UniRule"/>
</dbReference>
<dbReference type="GO" id="GO:0000049">
    <property type="term" value="F:tRNA binding"/>
    <property type="evidence" value="ECO:0007669"/>
    <property type="project" value="UniProtKB-UniRule"/>
</dbReference>
<dbReference type="GO" id="GO:0070475">
    <property type="term" value="P:rRNA base methylation"/>
    <property type="evidence" value="ECO:0007669"/>
    <property type="project" value="UniProtKB-UniRule"/>
</dbReference>
<dbReference type="GO" id="GO:0030488">
    <property type="term" value="P:tRNA methylation"/>
    <property type="evidence" value="ECO:0007669"/>
    <property type="project" value="UniProtKB-UniRule"/>
</dbReference>
<dbReference type="CDD" id="cd01335">
    <property type="entry name" value="Radical_SAM"/>
    <property type="match status" value="1"/>
</dbReference>
<dbReference type="Gene3D" id="1.10.150.530">
    <property type="match status" value="1"/>
</dbReference>
<dbReference type="Gene3D" id="3.20.20.70">
    <property type="entry name" value="Aldolase class I"/>
    <property type="match status" value="1"/>
</dbReference>
<dbReference type="HAMAP" id="MF_01849">
    <property type="entry name" value="RNA_methyltr_RlmN"/>
    <property type="match status" value="1"/>
</dbReference>
<dbReference type="InterPro" id="IPR013785">
    <property type="entry name" value="Aldolase_TIM"/>
</dbReference>
<dbReference type="InterPro" id="IPR040072">
    <property type="entry name" value="Methyltransferase_A"/>
</dbReference>
<dbReference type="InterPro" id="IPR048641">
    <property type="entry name" value="RlmN_N"/>
</dbReference>
<dbReference type="InterPro" id="IPR027492">
    <property type="entry name" value="RNA_MTrfase_RlmN"/>
</dbReference>
<dbReference type="InterPro" id="IPR004383">
    <property type="entry name" value="rRNA_lsu_MTrfase_RlmN/Cfr"/>
</dbReference>
<dbReference type="InterPro" id="IPR007197">
    <property type="entry name" value="rSAM"/>
</dbReference>
<dbReference type="NCBIfam" id="TIGR00048">
    <property type="entry name" value="rRNA_mod_RlmN"/>
    <property type="match status" value="1"/>
</dbReference>
<dbReference type="PANTHER" id="PTHR30544">
    <property type="entry name" value="23S RRNA METHYLTRANSFERASE"/>
    <property type="match status" value="1"/>
</dbReference>
<dbReference type="PANTHER" id="PTHR30544:SF5">
    <property type="entry name" value="RADICAL SAM CORE DOMAIN-CONTAINING PROTEIN"/>
    <property type="match status" value="1"/>
</dbReference>
<dbReference type="Pfam" id="PF04055">
    <property type="entry name" value="Radical_SAM"/>
    <property type="match status" value="1"/>
</dbReference>
<dbReference type="Pfam" id="PF21016">
    <property type="entry name" value="RlmN_N"/>
    <property type="match status" value="1"/>
</dbReference>
<dbReference type="PIRSF" id="PIRSF006004">
    <property type="entry name" value="CHP00048"/>
    <property type="match status" value="1"/>
</dbReference>
<dbReference type="SFLD" id="SFLDF00275">
    <property type="entry name" value="adenosine_C2_methyltransferase"/>
    <property type="match status" value="1"/>
</dbReference>
<dbReference type="SFLD" id="SFLDS00029">
    <property type="entry name" value="Radical_SAM"/>
    <property type="match status" value="1"/>
</dbReference>
<dbReference type="SUPFAM" id="SSF102114">
    <property type="entry name" value="Radical SAM enzymes"/>
    <property type="match status" value="1"/>
</dbReference>
<dbReference type="PROSITE" id="PS51918">
    <property type="entry name" value="RADICAL_SAM"/>
    <property type="match status" value="1"/>
</dbReference>
<evidence type="ECO:0000255" key="1">
    <source>
        <dbReference type="HAMAP-Rule" id="MF_01849"/>
    </source>
</evidence>
<evidence type="ECO:0000255" key="2">
    <source>
        <dbReference type="PROSITE-ProRule" id="PRU01266"/>
    </source>
</evidence>